<proteinExistence type="inferred from homology"/>
<feature type="chain" id="PRO_1000200625" description="NAD(P)H dehydrogenase (quinone)">
    <location>
        <begin position="1"/>
        <end position="198"/>
    </location>
</feature>
<feature type="domain" description="Flavodoxin-like" evidence="1">
    <location>
        <begin position="4"/>
        <end position="189"/>
    </location>
</feature>
<feature type="binding site" evidence="1">
    <location>
        <begin position="10"/>
        <end position="15"/>
    </location>
    <ligand>
        <name>FMN</name>
        <dbReference type="ChEBI" id="CHEBI:58210"/>
    </ligand>
</feature>
<feature type="binding site" evidence="1">
    <location>
        <position position="12"/>
    </location>
    <ligand>
        <name>NAD(+)</name>
        <dbReference type="ChEBI" id="CHEBI:57540"/>
    </ligand>
</feature>
<feature type="binding site" evidence="1">
    <location>
        <begin position="78"/>
        <end position="80"/>
    </location>
    <ligand>
        <name>FMN</name>
        <dbReference type="ChEBI" id="CHEBI:58210"/>
    </ligand>
</feature>
<feature type="binding site" evidence="1">
    <location>
        <position position="98"/>
    </location>
    <ligand>
        <name>substrate</name>
    </ligand>
</feature>
<feature type="binding site" evidence="1">
    <location>
        <begin position="113"/>
        <end position="118"/>
    </location>
    <ligand>
        <name>FMN</name>
        <dbReference type="ChEBI" id="CHEBI:58210"/>
    </ligand>
</feature>
<feature type="binding site" evidence="1">
    <location>
        <position position="133"/>
    </location>
    <ligand>
        <name>FMN</name>
        <dbReference type="ChEBI" id="CHEBI:58210"/>
    </ligand>
</feature>
<sequence>MAKVLVLYYSMYGHIETMARAVAEGASKVDGAEVVVKRVPETMSPQLFEKAGGKTQTAPVATPQELANYDAIIFGTPTRFGNMSGQMRTFLDQTGGLWASGALYGKLASVFSSTGTGGGQEQTITSTWTTLAHHGMVIVPIGYAAQELFDVSQVRGGTPYGATTIAGGDGSRQPSQEELSIARYQGEYVAGLAVKLNG</sequence>
<reference key="1">
    <citation type="journal article" date="2011" name="Proc. Natl. Acad. Sci. U.S.A.">
        <title>Genomic anatomy of Escherichia coli O157:H7 outbreaks.</title>
        <authorList>
            <person name="Eppinger M."/>
            <person name="Mammel M.K."/>
            <person name="Leclerc J.E."/>
            <person name="Ravel J."/>
            <person name="Cebula T.A."/>
        </authorList>
    </citation>
    <scope>NUCLEOTIDE SEQUENCE [LARGE SCALE GENOMIC DNA]</scope>
    <source>
        <strain>EC4115 / EHEC</strain>
    </source>
</reference>
<evidence type="ECO:0000255" key="1">
    <source>
        <dbReference type="HAMAP-Rule" id="MF_01017"/>
    </source>
</evidence>
<keyword id="KW-0285">Flavoprotein</keyword>
<keyword id="KW-0288">FMN</keyword>
<keyword id="KW-0520">NAD</keyword>
<keyword id="KW-0521">NADP</keyword>
<keyword id="KW-0547">Nucleotide-binding</keyword>
<keyword id="KW-0560">Oxidoreductase</keyword>
<accession>B5YU47</accession>
<protein>
    <recommendedName>
        <fullName evidence="1">NAD(P)H dehydrogenase (quinone)</fullName>
        <ecNumber evidence="1">1.6.5.2</ecNumber>
    </recommendedName>
    <alternativeName>
        <fullName>Flavoprotein WrbA</fullName>
    </alternativeName>
    <alternativeName>
        <fullName evidence="1">NAD(P)H:quinone oxidoreductase</fullName>
        <shortName evidence="1">NQO</shortName>
    </alternativeName>
</protein>
<organism>
    <name type="scientific">Escherichia coli O157:H7 (strain EC4115 / EHEC)</name>
    <dbReference type="NCBI Taxonomy" id="444450"/>
    <lineage>
        <taxon>Bacteria</taxon>
        <taxon>Pseudomonadati</taxon>
        <taxon>Pseudomonadota</taxon>
        <taxon>Gammaproteobacteria</taxon>
        <taxon>Enterobacterales</taxon>
        <taxon>Enterobacteriaceae</taxon>
        <taxon>Escherichia</taxon>
    </lineage>
</organism>
<dbReference type="EC" id="1.6.5.2" evidence="1"/>
<dbReference type="EMBL" id="CP001164">
    <property type="protein sequence ID" value="ACI36358.1"/>
    <property type="molecule type" value="Genomic_DNA"/>
</dbReference>
<dbReference type="SMR" id="B5YU47"/>
<dbReference type="KEGG" id="ecf:ECH74115_1242"/>
<dbReference type="HOGENOM" id="CLU_051402_0_2_6"/>
<dbReference type="GO" id="GO:0016020">
    <property type="term" value="C:membrane"/>
    <property type="evidence" value="ECO:0007669"/>
    <property type="project" value="TreeGrafter"/>
</dbReference>
<dbReference type="GO" id="GO:0050660">
    <property type="term" value="F:flavin adenine dinucleotide binding"/>
    <property type="evidence" value="ECO:0007669"/>
    <property type="project" value="UniProtKB-UniRule"/>
</dbReference>
<dbReference type="GO" id="GO:0010181">
    <property type="term" value="F:FMN binding"/>
    <property type="evidence" value="ECO:0007669"/>
    <property type="project" value="InterPro"/>
</dbReference>
<dbReference type="GO" id="GO:0051287">
    <property type="term" value="F:NAD binding"/>
    <property type="evidence" value="ECO:0007669"/>
    <property type="project" value="UniProtKB-UniRule"/>
</dbReference>
<dbReference type="GO" id="GO:0050136">
    <property type="term" value="F:NADH:ubiquinone reductase (non-electrogenic) activity"/>
    <property type="evidence" value="ECO:0007669"/>
    <property type="project" value="RHEA"/>
</dbReference>
<dbReference type="GO" id="GO:0050661">
    <property type="term" value="F:NADP binding"/>
    <property type="evidence" value="ECO:0007669"/>
    <property type="project" value="UniProtKB-UniRule"/>
</dbReference>
<dbReference type="GO" id="GO:0008753">
    <property type="term" value="F:NADPH dehydrogenase (quinone) activity"/>
    <property type="evidence" value="ECO:0007669"/>
    <property type="project" value="RHEA"/>
</dbReference>
<dbReference type="FunFam" id="3.40.50.360:FF:000004">
    <property type="entry name" value="NAD(P)H dehydrogenase (quinone)"/>
    <property type="match status" value="1"/>
</dbReference>
<dbReference type="Gene3D" id="3.40.50.360">
    <property type="match status" value="1"/>
</dbReference>
<dbReference type="HAMAP" id="MF_01017">
    <property type="entry name" value="NQOR"/>
    <property type="match status" value="1"/>
</dbReference>
<dbReference type="InterPro" id="IPR008254">
    <property type="entry name" value="Flavodoxin/NO_synth"/>
</dbReference>
<dbReference type="InterPro" id="IPR029039">
    <property type="entry name" value="Flavoprotein-like_sf"/>
</dbReference>
<dbReference type="InterPro" id="IPR010089">
    <property type="entry name" value="Flavoprotein_WrbA-like"/>
</dbReference>
<dbReference type="InterPro" id="IPR005025">
    <property type="entry name" value="FMN_Rdtase-like_dom"/>
</dbReference>
<dbReference type="InterPro" id="IPR037513">
    <property type="entry name" value="NQO"/>
</dbReference>
<dbReference type="NCBIfam" id="TIGR01755">
    <property type="entry name" value="flav_wrbA"/>
    <property type="match status" value="1"/>
</dbReference>
<dbReference type="NCBIfam" id="NF002999">
    <property type="entry name" value="PRK03767.1"/>
    <property type="match status" value="1"/>
</dbReference>
<dbReference type="PANTHER" id="PTHR30546">
    <property type="entry name" value="FLAVODOXIN-RELATED PROTEIN WRBA-RELATED"/>
    <property type="match status" value="1"/>
</dbReference>
<dbReference type="PANTHER" id="PTHR30546:SF23">
    <property type="entry name" value="FLAVOPROTEIN-LIKE PROTEIN YCP4-RELATED"/>
    <property type="match status" value="1"/>
</dbReference>
<dbReference type="Pfam" id="PF03358">
    <property type="entry name" value="FMN_red"/>
    <property type="match status" value="1"/>
</dbReference>
<dbReference type="SUPFAM" id="SSF52218">
    <property type="entry name" value="Flavoproteins"/>
    <property type="match status" value="1"/>
</dbReference>
<dbReference type="PROSITE" id="PS50902">
    <property type="entry name" value="FLAVODOXIN_LIKE"/>
    <property type="match status" value="1"/>
</dbReference>
<gene>
    <name type="ordered locus">ECH74115_1242</name>
</gene>
<name>NQOR_ECO5E</name>
<comment type="catalytic activity">
    <reaction evidence="1">
        <text>a quinone + NADH + H(+) = a quinol + NAD(+)</text>
        <dbReference type="Rhea" id="RHEA:46160"/>
        <dbReference type="ChEBI" id="CHEBI:15378"/>
        <dbReference type="ChEBI" id="CHEBI:24646"/>
        <dbReference type="ChEBI" id="CHEBI:57540"/>
        <dbReference type="ChEBI" id="CHEBI:57945"/>
        <dbReference type="ChEBI" id="CHEBI:132124"/>
        <dbReference type="EC" id="1.6.5.2"/>
    </reaction>
</comment>
<comment type="catalytic activity">
    <reaction evidence="1">
        <text>a quinone + NADPH + H(+) = a quinol + NADP(+)</text>
        <dbReference type="Rhea" id="RHEA:46164"/>
        <dbReference type="ChEBI" id="CHEBI:15378"/>
        <dbReference type="ChEBI" id="CHEBI:24646"/>
        <dbReference type="ChEBI" id="CHEBI:57783"/>
        <dbReference type="ChEBI" id="CHEBI:58349"/>
        <dbReference type="ChEBI" id="CHEBI:132124"/>
        <dbReference type="EC" id="1.6.5.2"/>
    </reaction>
</comment>
<comment type="cofactor">
    <cofactor evidence="1">
        <name>FMN</name>
        <dbReference type="ChEBI" id="CHEBI:58210"/>
    </cofactor>
    <text evidence="1">Binds 1 FMN per monomer.</text>
</comment>
<comment type="similarity">
    <text evidence="1">Belongs to the WrbA family.</text>
</comment>